<proteinExistence type="inferred from homology"/>
<accession>Q5BGA7</accession>
<accession>C8VTG2</accession>
<gene>
    <name type="primary">xyl1</name>
    <name type="ORF">AN0423</name>
</gene>
<sequence>MSPPTVKLNSGYDMPLVGFGLWKVNNDTCADQVYEAIKAGYRLFDGACDYGNEVEAGQGVARAIKEGIVKRSDLFIVSKLWNSFHDGERVEPIARKQLSDWGIDYFDLYIVHFPVSLKYVDPEVRYPPGWENAEGKVELGKATIQETWTAMESLVDKGLARSIGISNFSAQLLLDLLRYARIRPATLQIEHHPYLTQERLVTFAQREGIAVTAYSSFGPLSFLELSVKQAEGAPPLFEHPVIKDIAEKHGKTPAQVLLRWATQRGIAVIPKSNNPARLLQNLDVVGFDLEDGELKAISDLDKGLRFNDPPNYGLPITIF</sequence>
<evidence type="ECO:0000250" key="1"/>
<evidence type="ECO:0000305" key="2"/>
<dbReference type="EC" id="1.1.1.307"/>
<dbReference type="EMBL" id="AACD01000007">
    <property type="protein sequence ID" value="EAA66522.1"/>
    <property type="molecule type" value="Genomic_DNA"/>
</dbReference>
<dbReference type="EMBL" id="BN001308">
    <property type="protein sequence ID" value="CBF89516.1"/>
    <property type="molecule type" value="Genomic_DNA"/>
</dbReference>
<dbReference type="RefSeq" id="XP_658027.1">
    <property type="nucleotide sequence ID" value="XM_652935.1"/>
</dbReference>
<dbReference type="SMR" id="Q5BGA7"/>
<dbReference type="FunCoup" id="Q5BGA7">
    <property type="interactions" value="412"/>
</dbReference>
<dbReference type="STRING" id="227321.Q5BGA7"/>
<dbReference type="EnsemblFungi" id="CBF89516">
    <property type="protein sequence ID" value="CBF89516"/>
    <property type="gene ID" value="ANIA_00423"/>
</dbReference>
<dbReference type="KEGG" id="ani:ANIA_00423"/>
<dbReference type="VEuPathDB" id="FungiDB:AN0423"/>
<dbReference type="eggNOG" id="KOG1577">
    <property type="taxonomic scope" value="Eukaryota"/>
</dbReference>
<dbReference type="HOGENOM" id="CLU_023205_0_0_1"/>
<dbReference type="InParanoid" id="Q5BGA7"/>
<dbReference type="OMA" id="VHWPSEG"/>
<dbReference type="OrthoDB" id="416253at2759"/>
<dbReference type="UniPathway" id="UPA00810"/>
<dbReference type="Proteomes" id="UP000000560">
    <property type="component" value="Chromosome VIII"/>
</dbReference>
<dbReference type="GO" id="GO:0005829">
    <property type="term" value="C:cytosol"/>
    <property type="evidence" value="ECO:0000318"/>
    <property type="project" value="GO_Central"/>
</dbReference>
<dbReference type="GO" id="GO:0005576">
    <property type="term" value="C:extracellular region"/>
    <property type="evidence" value="ECO:0000314"/>
    <property type="project" value="AspGD"/>
</dbReference>
<dbReference type="GO" id="GO:0004032">
    <property type="term" value="F:aldose reductase (NADPH) activity"/>
    <property type="evidence" value="ECO:0000318"/>
    <property type="project" value="GO_Central"/>
</dbReference>
<dbReference type="GO" id="GO:0032866">
    <property type="term" value="F:D-xylose reductase (NADPH) activity"/>
    <property type="evidence" value="ECO:0007669"/>
    <property type="project" value="InterPro"/>
</dbReference>
<dbReference type="GO" id="GO:0042843">
    <property type="term" value="P:D-xylose catabolic process"/>
    <property type="evidence" value="ECO:0007669"/>
    <property type="project" value="UniProtKB-UniPathway"/>
</dbReference>
<dbReference type="CDD" id="cd19115">
    <property type="entry name" value="AKR_AKR2D1"/>
    <property type="match status" value="1"/>
</dbReference>
<dbReference type="FunFam" id="3.20.20.100:FF:000007">
    <property type="entry name" value="NAD(P)H-dependent D-xylose reductase xyl1"/>
    <property type="match status" value="1"/>
</dbReference>
<dbReference type="Gene3D" id="3.20.20.100">
    <property type="entry name" value="NADP-dependent oxidoreductase domain"/>
    <property type="match status" value="1"/>
</dbReference>
<dbReference type="InterPro" id="IPR020471">
    <property type="entry name" value="AKR"/>
</dbReference>
<dbReference type="InterPro" id="IPR044487">
    <property type="entry name" value="AKR2D"/>
</dbReference>
<dbReference type="InterPro" id="IPR018170">
    <property type="entry name" value="Aldo/ket_reductase_CS"/>
</dbReference>
<dbReference type="InterPro" id="IPR023210">
    <property type="entry name" value="NADP_OxRdtase_dom"/>
</dbReference>
<dbReference type="InterPro" id="IPR036812">
    <property type="entry name" value="NADP_OxRdtase_dom_sf"/>
</dbReference>
<dbReference type="PANTHER" id="PTHR11732">
    <property type="entry name" value="ALDO/KETO REDUCTASE"/>
    <property type="match status" value="1"/>
</dbReference>
<dbReference type="Pfam" id="PF00248">
    <property type="entry name" value="Aldo_ket_red"/>
    <property type="match status" value="1"/>
</dbReference>
<dbReference type="PIRSF" id="PIRSF000097">
    <property type="entry name" value="AKR"/>
    <property type="match status" value="1"/>
</dbReference>
<dbReference type="PRINTS" id="PR00069">
    <property type="entry name" value="ALDKETRDTASE"/>
</dbReference>
<dbReference type="SUPFAM" id="SSF51430">
    <property type="entry name" value="NAD(P)-linked oxidoreductase"/>
    <property type="match status" value="1"/>
</dbReference>
<dbReference type="PROSITE" id="PS00798">
    <property type="entry name" value="ALDOKETO_REDUCTASE_1"/>
    <property type="match status" value="1"/>
</dbReference>
<dbReference type="PROSITE" id="PS00062">
    <property type="entry name" value="ALDOKETO_REDUCTASE_2"/>
    <property type="match status" value="1"/>
</dbReference>
<dbReference type="PROSITE" id="PS00063">
    <property type="entry name" value="ALDOKETO_REDUCTASE_3"/>
    <property type="match status" value="1"/>
</dbReference>
<feature type="chain" id="PRO_0000393503" description="Probable NAD(P)H-dependent D-xylose reductase xyl1">
    <location>
        <begin position="1"/>
        <end position="319"/>
    </location>
</feature>
<feature type="active site" description="Proton donor" evidence="1">
    <location>
        <position position="50"/>
    </location>
</feature>
<feature type="binding site" evidence="1">
    <location>
        <position position="112"/>
    </location>
    <ligand>
        <name>substrate</name>
    </ligand>
</feature>
<feature type="binding site" evidence="1">
    <location>
        <begin position="166"/>
        <end position="167"/>
    </location>
    <ligand>
        <name>NAD(+)</name>
        <dbReference type="ChEBI" id="CHEBI:57540"/>
    </ligand>
</feature>
<feature type="binding site" evidence="1">
    <location>
        <begin position="215"/>
        <end position="224"/>
    </location>
    <ligand>
        <name>NAD(+)</name>
        <dbReference type="ChEBI" id="CHEBI:57540"/>
    </ligand>
</feature>
<feature type="binding site" evidence="1">
    <location>
        <begin position="271"/>
        <end position="281"/>
    </location>
    <ligand>
        <name>NAD(+)</name>
        <dbReference type="ChEBI" id="CHEBI:57540"/>
    </ligand>
</feature>
<feature type="site" description="Lowers pKa of active site Tyr" evidence="1">
    <location>
        <position position="79"/>
    </location>
</feature>
<name>XYL1_EMENI</name>
<organism>
    <name type="scientific">Emericella nidulans (strain FGSC A4 / ATCC 38163 / CBS 112.46 / NRRL 194 / M139)</name>
    <name type="common">Aspergillus nidulans</name>
    <dbReference type="NCBI Taxonomy" id="227321"/>
    <lineage>
        <taxon>Eukaryota</taxon>
        <taxon>Fungi</taxon>
        <taxon>Dikarya</taxon>
        <taxon>Ascomycota</taxon>
        <taxon>Pezizomycotina</taxon>
        <taxon>Eurotiomycetes</taxon>
        <taxon>Eurotiomycetidae</taxon>
        <taxon>Eurotiales</taxon>
        <taxon>Aspergillaceae</taxon>
        <taxon>Aspergillus</taxon>
        <taxon>Aspergillus subgen. Nidulantes</taxon>
    </lineage>
</organism>
<protein>
    <recommendedName>
        <fullName>Probable NAD(P)H-dependent D-xylose reductase xyl1</fullName>
        <shortName>XR</shortName>
        <ecNumber>1.1.1.307</ecNumber>
    </recommendedName>
</protein>
<keyword id="KW-0119">Carbohydrate metabolism</keyword>
<keyword id="KW-0520">NAD</keyword>
<keyword id="KW-0521">NADP</keyword>
<keyword id="KW-0560">Oxidoreductase</keyword>
<keyword id="KW-1185">Reference proteome</keyword>
<keyword id="KW-0859">Xylose metabolism</keyword>
<reference key="1">
    <citation type="journal article" date="2005" name="Nature">
        <title>Sequencing of Aspergillus nidulans and comparative analysis with A. fumigatus and A. oryzae.</title>
        <authorList>
            <person name="Galagan J.E."/>
            <person name="Calvo S.E."/>
            <person name="Cuomo C."/>
            <person name="Ma L.-J."/>
            <person name="Wortman J.R."/>
            <person name="Batzoglou S."/>
            <person name="Lee S.-I."/>
            <person name="Bastuerkmen M."/>
            <person name="Spevak C.C."/>
            <person name="Clutterbuck J."/>
            <person name="Kapitonov V."/>
            <person name="Jurka J."/>
            <person name="Scazzocchio C."/>
            <person name="Farman M.L."/>
            <person name="Butler J."/>
            <person name="Purcell S."/>
            <person name="Harris S."/>
            <person name="Braus G.H."/>
            <person name="Draht O."/>
            <person name="Busch S."/>
            <person name="D'Enfert C."/>
            <person name="Bouchier C."/>
            <person name="Goldman G.H."/>
            <person name="Bell-Pedersen D."/>
            <person name="Griffiths-Jones S."/>
            <person name="Doonan J.H."/>
            <person name="Yu J."/>
            <person name="Vienken K."/>
            <person name="Pain A."/>
            <person name="Freitag M."/>
            <person name="Selker E.U."/>
            <person name="Archer D.B."/>
            <person name="Penalva M.A."/>
            <person name="Oakley B.R."/>
            <person name="Momany M."/>
            <person name="Tanaka T."/>
            <person name="Kumagai T."/>
            <person name="Asai K."/>
            <person name="Machida M."/>
            <person name="Nierman W.C."/>
            <person name="Denning D.W."/>
            <person name="Caddick M.X."/>
            <person name="Hynes M."/>
            <person name="Paoletti M."/>
            <person name="Fischer R."/>
            <person name="Miller B.L."/>
            <person name="Dyer P.S."/>
            <person name="Sachs M.S."/>
            <person name="Osmani S.A."/>
            <person name="Birren B.W."/>
        </authorList>
    </citation>
    <scope>NUCLEOTIDE SEQUENCE [LARGE SCALE GENOMIC DNA]</scope>
    <source>
        <strain>FGSC A4 / ATCC 38163 / CBS 112.46 / NRRL 194 / M139</strain>
    </source>
</reference>
<reference key="2">
    <citation type="journal article" date="2009" name="Fungal Genet. Biol.">
        <title>The 2008 update of the Aspergillus nidulans genome annotation: a community effort.</title>
        <authorList>
            <person name="Wortman J.R."/>
            <person name="Gilsenan J.M."/>
            <person name="Joardar V."/>
            <person name="Deegan J."/>
            <person name="Clutterbuck J."/>
            <person name="Andersen M.R."/>
            <person name="Archer D."/>
            <person name="Bencina M."/>
            <person name="Braus G."/>
            <person name="Coutinho P."/>
            <person name="von Dohren H."/>
            <person name="Doonan J."/>
            <person name="Driessen A.J."/>
            <person name="Durek P."/>
            <person name="Espeso E."/>
            <person name="Fekete E."/>
            <person name="Flipphi M."/>
            <person name="Estrada C.G."/>
            <person name="Geysens S."/>
            <person name="Goldman G."/>
            <person name="de Groot P.W."/>
            <person name="Hansen K."/>
            <person name="Harris S.D."/>
            <person name="Heinekamp T."/>
            <person name="Helmstaedt K."/>
            <person name="Henrissat B."/>
            <person name="Hofmann G."/>
            <person name="Homan T."/>
            <person name="Horio T."/>
            <person name="Horiuchi H."/>
            <person name="James S."/>
            <person name="Jones M."/>
            <person name="Karaffa L."/>
            <person name="Karanyi Z."/>
            <person name="Kato M."/>
            <person name="Keller N."/>
            <person name="Kelly D.E."/>
            <person name="Kiel J.A."/>
            <person name="Kim J.M."/>
            <person name="van der Klei I.J."/>
            <person name="Klis F.M."/>
            <person name="Kovalchuk A."/>
            <person name="Krasevec N."/>
            <person name="Kubicek C.P."/>
            <person name="Liu B."/>
            <person name="Maccabe A."/>
            <person name="Meyer V."/>
            <person name="Mirabito P."/>
            <person name="Miskei M."/>
            <person name="Mos M."/>
            <person name="Mullins J."/>
            <person name="Nelson D.R."/>
            <person name="Nielsen J."/>
            <person name="Oakley B.R."/>
            <person name="Osmani S.A."/>
            <person name="Pakula T."/>
            <person name="Paszewski A."/>
            <person name="Paulsen I."/>
            <person name="Pilsyk S."/>
            <person name="Pocsi I."/>
            <person name="Punt P.J."/>
            <person name="Ram A.F."/>
            <person name="Ren Q."/>
            <person name="Robellet X."/>
            <person name="Robson G."/>
            <person name="Seiboth B."/>
            <person name="van Solingen P."/>
            <person name="Specht T."/>
            <person name="Sun J."/>
            <person name="Taheri-Talesh N."/>
            <person name="Takeshita N."/>
            <person name="Ussery D."/>
            <person name="vanKuyk P.A."/>
            <person name="Visser H."/>
            <person name="van de Vondervoort P.J."/>
            <person name="de Vries R.P."/>
            <person name="Walton J."/>
            <person name="Xiang X."/>
            <person name="Xiong Y."/>
            <person name="Zeng A.P."/>
            <person name="Brandt B.W."/>
            <person name="Cornell M.J."/>
            <person name="van den Hondel C.A."/>
            <person name="Visser J."/>
            <person name="Oliver S.G."/>
            <person name="Turner G."/>
        </authorList>
    </citation>
    <scope>GENOME REANNOTATION</scope>
    <source>
        <strain>FGSC A4 / ATCC 38163 / CBS 112.46 / NRRL 194 / M139</strain>
    </source>
</reference>
<comment type="function">
    <text evidence="1">Catalyzes the initial reaction in the xylose utilization pathway by reducing D-xylose into xylitol. Xylose is a major component of hemicelluloses such as xylan. Most fungi utilize D-xylose via three enzymatic reactions, xylose reductase (XR), xylitol dehydrogenase (XDH), and xylulokinase, to form xylulose 5-phosphate, which enters pentose phosphate pathway (By similarity).</text>
</comment>
<comment type="catalytic activity">
    <reaction>
        <text>xylitol + NAD(+) = D-xylose + NADH + H(+)</text>
        <dbReference type="Rhea" id="RHEA:27441"/>
        <dbReference type="ChEBI" id="CHEBI:15378"/>
        <dbReference type="ChEBI" id="CHEBI:17151"/>
        <dbReference type="ChEBI" id="CHEBI:53455"/>
        <dbReference type="ChEBI" id="CHEBI:57540"/>
        <dbReference type="ChEBI" id="CHEBI:57945"/>
        <dbReference type="EC" id="1.1.1.307"/>
    </reaction>
</comment>
<comment type="catalytic activity">
    <reaction>
        <text>xylitol + NADP(+) = D-xylose + NADPH + H(+)</text>
        <dbReference type="Rhea" id="RHEA:27445"/>
        <dbReference type="ChEBI" id="CHEBI:15378"/>
        <dbReference type="ChEBI" id="CHEBI:17151"/>
        <dbReference type="ChEBI" id="CHEBI:53455"/>
        <dbReference type="ChEBI" id="CHEBI:57783"/>
        <dbReference type="ChEBI" id="CHEBI:58349"/>
        <dbReference type="EC" id="1.1.1.307"/>
    </reaction>
</comment>
<comment type="pathway">
    <text>Carbohydrate metabolism; D-xylose degradation.</text>
</comment>
<comment type="similarity">
    <text evidence="2">Belongs to the aldo/keto reductase family.</text>
</comment>